<keyword id="KW-0238">DNA-binding</keyword>
<keyword id="KW-0804">Transcription</keyword>
<keyword id="KW-0805">Transcription regulation</keyword>
<comment type="function">
    <text evidence="1">Involved in anaerobic NO protection.</text>
</comment>
<comment type="similarity">
    <text evidence="2">Belongs to the LysR transcriptional regulatory family.</text>
</comment>
<dbReference type="EMBL" id="CP001164">
    <property type="protein sequence ID" value="ACI36598.1"/>
    <property type="molecule type" value="Genomic_DNA"/>
</dbReference>
<dbReference type="RefSeq" id="WP_000748496.1">
    <property type="nucleotide sequence ID" value="NC_011353.1"/>
</dbReference>
<dbReference type="SMR" id="B5YXB5"/>
<dbReference type="KEGG" id="ecf:ECH74115_5142"/>
<dbReference type="HOGENOM" id="CLU_039613_39_2_6"/>
<dbReference type="GO" id="GO:0003677">
    <property type="term" value="F:DNA binding"/>
    <property type="evidence" value="ECO:0007669"/>
    <property type="project" value="UniProtKB-KW"/>
</dbReference>
<dbReference type="GO" id="GO:0003700">
    <property type="term" value="F:DNA-binding transcription factor activity"/>
    <property type="evidence" value="ECO:0007669"/>
    <property type="project" value="UniProtKB-UniRule"/>
</dbReference>
<dbReference type="CDD" id="cd08417">
    <property type="entry name" value="PBP2_Nitroaromatics_like"/>
    <property type="match status" value="1"/>
</dbReference>
<dbReference type="FunFam" id="3.40.190.10:FF:000092">
    <property type="entry name" value="HTH-type transcriptional regulator YidZ"/>
    <property type="match status" value="1"/>
</dbReference>
<dbReference type="Gene3D" id="3.40.190.10">
    <property type="entry name" value="Periplasmic binding protein-like II"/>
    <property type="match status" value="2"/>
</dbReference>
<dbReference type="Gene3D" id="1.10.10.10">
    <property type="entry name" value="Winged helix-like DNA-binding domain superfamily/Winged helix DNA-binding domain"/>
    <property type="match status" value="1"/>
</dbReference>
<dbReference type="HAMAP" id="MF_01607">
    <property type="entry name" value="HTH_type_YidZ"/>
    <property type="match status" value="1"/>
</dbReference>
<dbReference type="InterPro" id="IPR050389">
    <property type="entry name" value="LysR-type_TF"/>
</dbReference>
<dbReference type="InterPro" id="IPR005119">
    <property type="entry name" value="LysR_subst-bd"/>
</dbReference>
<dbReference type="InterPro" id="IPR000847">
    <property type="entry name" value="Tscrpt_reg_HTH_LysR"/>
</dbReference>
<dbReference type="InterPro" id="IPR023746">
    <property type="entry name" value="Tscrpt_reg_YidZ"/>
</dbReference>
<dbReference type="InterPro" id="IPR036388">
    <property type="entry name" value="WH-like_DNA-bd_sf"/>
</dbReference>
<dbReference type="InterPro" id="IPR036390">
    <property type="entry name" value="WH_DNA-bd_sf"/>
</dbReference>
<dbReference type="InterPro" id="IPR037402">
    <property type="entry name" value="YidZ_PBP2"/>
</dbReference>
<dbReference type="NCBIfam" id="NF007581">
    <property type="entry name" value="PRK10216.1"/>
    <property type="match status" value="1"/>
</dbReference>
<dbReference type="PANTHER" id="PTHR30118">
    <property type="entry name" value="HTH-TYPE TRANSCRIPTIONAL REGULATOR LEUO-RELATED"/>
    <property type="match status" value="1"/>
</dbReference>
<dbReference type="PANTHER" id="PTHR30118:SF11">
    <property type="entry name" value="HTH-TYPE TRANSCRIPTIONAL REGULATOR YIDZ"/>
    <property type="match status" value="1"/>
</dbReference>
<dbReference type="Pfam" id="PF00126">
    <property type="entry name" value="HTH_1"/>
    <property type="match status" value="1"/>
</dbReference>
<dbReference type="Pfam" id="PF03466">
    <property type="entry name" value="LysR_substrate"/>
    <property type="match status" value="1"/>
</dbReference>
<dbReference type="SUPFAM" id="SSF53850">
    <property type="entry name" value="Periplasmic binding protein-like II"/>
    <property type="match status" value="1"/>
</dbReference>
<dbReference type="SUPFAM" id="SSF46785">
    <property type="entry name" value="Winged helix' DNA-binding domain"/>
    <property type="match status" value="1"/>
</dbReference>
<dbReference type="PROSITE" id="PS50931">
    <property type="entry name" value="HTH_LYSR"/>
    <property type="match status" value="1"/>
</dbReference>
<evidence type="ECO:0000255" key="1">
    <source>
        <dbReference type="HAMAP-Rule" id="MF_01607"/>
    </source>
</evidence>
<evidence type="ECO:0000305" key="2"/>
<proteinExistence type="inferred from homology"/>
<reference key="1">
    <citation type="journal article" date="2011" name="Proc. Natl. Acad. Sci. U.S.A.">
        <title>Genomic anatomy of Escherichia coli O157:H7 outbreaks.</title>
        <authorList>
            <person name="Eppinger M."/>
            <person name="Mammel M.K."/>
            <person name="Leclerc J.E."/>
            <person name="Ravel J."/>
            <person name="Cebula T.A."/>
        </authorList>
    </citation>
    <scope>NUCLEOTIDE SEQUENCE [LARGE SCALE GENOMIC DNA]</scope>
    <source>
        <strain>EC4115 / EHEC</strain>
    </source>
</reference>
<accession>B5YXB5</accession>
<organism>
    <name type="scientific">Escherichia coli O157:H7 (strain EC4115 / EHEC)</name>
    <dbReference type="NCBI Taxonomy" id="444450"/>
    <lineage>
        <taxon>Bacteria</taxon>
        <taxon>Pseudomonadati</taxon>
        <taxon>Pseudomonadota</taxon>
        <taxon>Gammaproteobacteria</taxon>
        <taxon>Enterobacterales</taxon>
        <taxon>Enterobacteriaceae</taxon>
        <taxon>Escherichia</taxon>
    </lineage>
</organism>
<feature type="chain" id="PRO_1000148194" description="HTH-type transcriptional regulator YidZ">
    <location>
        <begin position="1"/>
        <end position="319"/>
    </location>
</feature>
<feature type="domain" description="HTH lysR-type" evidence="1">
    <location>
        <begin position="8"/>
        <end position="65"/>
    </location>
</feature>
<feature type="DNA-binding region" description="H-T-H motif" evidence="1">
    <location>
        <begin position="25"/>
        <end position="44"/>
    </location>
</feature>
<protein>
    <recommendedName>
        <fullName evidence="1">HTH-type transcriptional regulator YidZ</fullName>
    </recommendedName>
</protein>
<name>YIDZ_ECO5E</name>
<sequence>MKKSITTLDLNLLLCLQLLMQERSVTKAAKRMNVTPSAVSKSLAKLRAWFDDPLFVNSPLGLSPTPLMVSMEQNLAEWMQMSNLLLDKPHHQTPRGLKFELAAESPLMMIMLNALSKQIYQRYPQATIKLRNWDYDSLDAITRGEVDIGFSGRESHPRSRELLSSLPLAIDYEVLFSDVPCVWLRKDHPALHEKWDLDTFLRYPHISICWEQSDTWALDNVLQELGRERTIAMSLPEFEQSLFMAAQPDNLLLATAPRYCQYYNQLHQLPLVALPLPFDESQQKKLEVPFTLLWHKRNSHNPKIVWLRDTIKNLYASMA</sequence>
<gene>
    <name evidence="1" type="primary">yidZ</name>
    <name type="ordered locus">ECH74115_5142</name>
</gene>